<evidence type="ECO:0000255" key="1">
    <source>
        <dbReference type="HAMAP-Rule" id="MF_00651"/>
    </source>
</evidence>
<sequence>MRIMGLDLGDKKIGVALSDPMGWTAQGLDVIAVKGPPEASVERISELVRQYGVGKIVVGLPRNMNGSFGPRAERARAFAGCLAGALNLPVELWDERMTTLEAEKLLIEADLSRARRRQVIDKMAAVLILQSFLDSQGRPRREAGGKNPGGPEEP</sequence>
<accession>A5D3C3</accession>
<name>YQGF_PELTS</name>
<reference key="1">
    <citation type="journal article" date="2008" name="Genome Res.">
        <title>The genome of Pelotomaculum thermopropionicum reveals niche-associated evolution in anaerobic microbiota.</title>
        <authorList>
            <person name="Kosaka T."/>
            <person name="Kato S."/>
            <person name="Shimoyama T."/>
            <person name="Ishii S."/>
            <person name="Abe T."/>
            <person name="Watanabe K."/>
        </authorList>
    </citation>
    <scope>NUCLEOTIDE SEQUENCE [LARGE SCALE GENOMIC DNA]</scope>
    <source>
        <strain>DSM 13744 / JCM 10971 / SI</strain>
    </source>
</reference>
<gene>
    <name type="ordered locus">PTH_1065</name>
</gene>
<protein>
    <recommendedName>
        <fullName evidence="1">Putative pre-16S rRNA nuclease</fullName>
        <ecNumber evidence="1">3.1.-.-</ecNumber>
    </recommendedName>
</protein>
<dbReference type="EC" id="3.1.-.-" evidence="1"/>
<dbReference type="EMBL" id="AP009389">
    <property type="protein sequence ID" value="BAF59246.1"/>
    <property type="molecule type" value="Genomic_DNA"/>
</dbReference>
<dbReference type="SMR" id="A5D3C3"/>
<dbReference type="STRING" id="370438.PTH_1065"/>
<dbReference type="KEGG" id="pth:PTH_1065"/>
<dbReference type="eggNOG" id="COG0816">
    <property type="taxonomic scope" value="Bacteria"/>
</dbReference>
<dbReference type="HOGENOM" id="CLU_098240_2_0_9"/>
<dbReference type="Proteomes" id="UP000006556">
    <property type="component" value="Chromosome"/>
</dbReference>
<dbReference type="GO" id="GO:0005829">
    <property type="term" value="C:cytosol"/>
    <property type="evidence" value="ECO:0007669"/>
    <property type="project" value="TreeGrafter"/>
</dbReference>
<dbReference type="GO" id="GO:0004518">
    <property type="term" value="F:nuclease activity"/>
    <property type="evidence" value="ECO:0007669"/>
    <property type="project" value="UniProtKB-KW"/>
</dbReference>
<dbReference type="GO" id="GO:0000967">
    <property type="term" value="P:rRNA 5'-end processing"/>
    <property type="evidence" value="ECO:0007669"/>
    <property type="project" value="UniProtKB-UniRule"/>
</dbReference>
<dbReference type="CDD" id="cd16964">
    <property type="entry name" value="YqgF"/>
    <property type="match status" value="1"/>
</dbReference>
<dbReference type="Gene3D" id="3.30.420.140">
    <property type="entry name" value="YqgF/RNase H-like domain"/>
    <property type="match status" value="1"/>
</dbReference>
<dbReference type="HAMAP" id="MF_00651">
    <property type="entry name" value="Nuclease_YqgF"/>
    <property type="match status" value="1"/>
</dbReference>
<dbReference type="InterPro" id="IPR012337">
    <property type="entry name" value="RNaseH-like_sf"/>
</dbReference>
<dbReference type="InterPro" id="IPR005227">
    <property type="entry name" value="YqgF"/>
</dbReference>
<dbReference type="InterPro" id="IPR006641">
    <property type="entry name" value="YqgF/RNaseH-like_dom"/>
</dbReference>
<dbReference type="InterPro" id="IPR037027">
    <property type="entry name" value="YqgF/RNaseH-like_dom_sf"/>
</dbReference>
<dbReference type="NCBIfam" id="TIGR00250">
    <property type="entry name" value="RNAse_H_YqgF"/>
    <property type="match status" value="1"/>
</dbReference>
<dbReference type="PANTHER" id="PTHR33317">
    <property type="entry name" value="POLYNUCLEOTIDYL TRANSFERASE, RIBONUCLEASE H-LIKE SUPERFAMILY PROTEIN"/>
    <property type="match status" value="1"/>
</dbReference>
<dbReference type="PANTHER" id="PTHR33317:SF4">
    <property type="entry name" value="POLYNUCLEOTIDYL TRANSFERASE, RIBONUCLEASE H-LIKE SUPERFAMILY PROTEIN"/>
    <property type="match status" value="1"/>
</dbReference>
<dbReference type="Pfam" id="PF03652">
    <property type="entry name" value="RuvX"/>
    <property type="match status" value="1"/>
</dbReference>
<dbReference type="SMART" id="SM00732">
    <property type="entry name" value="YqgFc"/>
    <property type="match status" value="1"/>
</dbReference>
<dbReference type="SUPFAM" id="SSF53098">
    <property type="entry name" value="Ribonuclease H-like"/>
    <property type="match status" value="1"/>
</dbReference>
<comment type="function">
    <text evidence="1">Could be a nuclease involved in processing of the 5'-end of pre-16S rRNA.</text>
</comment>
<comment type="subcellular location">
    <subcellularLocation>
        <location evidence="1">Cytoplasm</location>
    </subcellularLocation>
</comment>
<comment type="similarity">
    <text evidence="1">Belongs to the YqgF nuclease family.</text>
</comment>
<organism>
    <name type="scientific">Pelotomaculum thermopropionicum (strain DSM 13744 / JCM 10971 / SI)</name>
    <dbReference type="NCBI Taxonomy" id="370438"/>
    <lineage>
        <taxon>Bacteria</taxon>
        <taxon>Bacillati</taxon>
        <taxon>Bacillota</taxon>
        <taxon>Clostridia</taxon>
        <taxon>Eubacteriales</taxon>
        <taxon>Desulfotomaculaceae</taxon>
        <taxon>Pelotomaculum</taxon>
    </lineage>
</organism>
<feature type="chain" id="PRO_1000082751" description="Putative pre-16S rRNA nuclease">
    <location>
        <begin position="1"/>
        <end position="154"/>
    </location>
</feature>
<proteinExistence type="inferred from homology"/>
<keyword id="KW-0963">Cytoplasm</keyword>
<keyword id="KW-0378">Hydrolase</keyword>
<keyword id="KW-0540">Nuclease</keyword>
<keyword id="KW-1185">Reference proteome</keyword>
<keyword id="KW-0690">Ribosome biogenesis</keyword>